<dbReference type="EC" id="1.1.1.261" evidence="1"/>
<dbReference type="EMBL" id="CP000682">
    <property type="protein sequence ID" value="ABP96393.1"/>
    <property type="molecule type" value="Genomic_DNA"/>
</dbReference>
<dbReference type="RefSeq" id="WP_012022180.1">
    <property type="nucleotide sequence ID" value="NZ_CP139956.1"/>
</dbReference>
<dbReference type="SMR" id="A4YIZ1"/>
<dbReference type="STRING" id="399549.Msed_2255"/>
<dbReference type="KEGG" id="mse:Msed_2255"/>
<dbReference type="eggNOG" id="arCOG00982">
    <property type="taxonomic scope" value="Archaea"/>
</dbReference>
<dbReference type="HOGENOM" id="CLU_038362_0_0_2"/>
<dbReference type="UniPathway" id="UPA00940"/>
<dbReference type="Proteomes" id="UP000000242">
    <property type="component" value="Chromosome"/>
</dbReference>
<dbReference type="GO" id="GO:0005737">
    <property type="term" value="C:cytoplasm"/>
    <property type="evidence" value="ECO:0007669"/>
    <property type="project" value="UniProtKB-SubCell"/>
</dbReference>
<dbReference type="GO" id="GO:0106357">
    <property type="term" value="F:glycerol-1-phosphate dehydrogenase (NAD+) activity"/>
    <property type="evidence" value="ECO:0007669"/>
    <property type="project" value="RHEA"/>
</dbReference>
<dbReference type="GO" id="GO:0106358">
    <property type="term" value="F:glycerol-1-phosphate dehydrogenase (NADP+) activity"/>
    <property type="evidence" value="ECO:0007669"/>
    <property type="project" value="RHEA"/>
</dbReference>
<dbReference type="GO" id="GO:0046872">
    <property type="term" value="F:metal ion binding"/>
    <property type="evidence" value="ECO:0007669"/>
    <property type="project" value="UniProtKB-KW"/>
</dbReference>
<dbReference type="GO" id="GO:0006650">
    <property type="term" value="P:glycerophospholipid metabolic process"/>
    <property type="evidence" value="ECO:0007669"/>
    <property type="project" value="UniProtKB-UniRule"/>
</dbReference>
<dbReference type="GO" id="GO:0008654">
    <property type="term" value="P:phospholipid biosynthetic process"/>
    <property type="evidence" value="ECO:0007669"/>
    <property type="project" value="UniProtKB-KW"/>
</dbReference>
<dbReference type="CDD" id="cd08173">
    <property type="entry name" value="Gro1PDH"/>
    <property type="match status" value="1"/>
</dbReference>
<dbReference type="Gene3D" id="3.40.50.1970">
    <property type="match status" value="1"/>
</dbReference>
<dbReference type="Gene3D" id="1.20.1090.10">
    <property type="entry name" value="Dehydroquinate synthase-like - alpha domain"/>
    <property type="match status" value="1"/>
</dbReference>
<dbReference type="HAMAP" id="MF_00497_A">
    <property type="entry name" value="G1P_dehydrogenase_A"/>
    <property type="match status" value="1"/>
</dbReference>
<dbReference type="InterPro" id="IPR023002">
    <property type="entry name" value="G1P_dehydrogenase_arc"/>
</dbReference>
<dbReference type="InterPro" id="IPR032837">
    <property type="entry name" value="G1PDH"/>
</dbReference>
<dbReference type="InterPro" id="IPR016205">
    <property type="entry name" value="Glycerol_DH"/>
</dbReference>
<dbReference type="NCBIfam" id="NF002022">
    <property type="entry name" value="PRK00843.1"/>
    <property type="match status" value="1"/>
</dbReference>
<dbReference type="PANTHER" id="PTHR43616">
    <property type="entry name" value="GLYCEROL DEHYDROGENASE"/>
    <property type="match status" value="1"/>
</dbReference>
<dbReference type="PANTHER" id="PTHR43616:SF5">
    <property type="entry name" value="GLYCEROL DEHYDROGENASE 1"/>
    <property type="match status" value="1"/>
</dbReference>
<dbReference type="Pfam" id="PF13685">
    <property type="entry name" value="Fe-ADH_2"/>
    <property type="match status" value="1"/>
</dbReference>
<dbReference type="PIRSF" id="PIRSF000112">
    <property type="entry name" value="Glycerol_dehydrogenase"/>
    <property type="match status" value="1"/>
</dbReference>
<dbReference type="SUPFAM" id="SSF56796">
    <property type="entry name" value="Dehydroquinate synthase-like"/>
    <property type="match status" value="1"/>
</dbReference>
<reference key="1">
    <citation type="journal article" date="2008" name="Appl. Environ. Microbiol.">
        <title>The genome sequence of the metal-mobilizing, extremely thermoacidophilic archaeon Metallosphaera sedula provides insights into bioleaching-associated metabolism.</title>
        <authorList>
            <person name="Auernik K.S."/>
            <person name="Maezato Y."/>
            <person name="Blum P.H."/>
            <person name="Kelly R.M."/>
        </authorList>
    </citation>
    <scope>NUCLEOTIDE SEQUENCE [LARGE SCALE GENOMIC DNA]</scope>
    <source>
        <strain>ATCC 51363 / DSM 5348 / JCM 9185 / NBRC 15509 / TH2</strain>
    </source>
</reference>
<proteinExistence type="inferred from homology"/>
<gene>
    <name evidence="1" type="primary">egsA</name>
    <name type="ordered locus">Msed_2255</name>
</gene>
<organism>
    <name type="scientific">Metallosphaera sedula (strain ATCC 51363 / DSM 5348 / JCM 9185 / NBRC 15509 / TH2)</name>
    <dbReference type="NCBI Taxonomy" id="399549"/>
    <lineage>
        <taxon>Archaea</taxon>
        <taxon>Thermoproteota</taxon>
        <taxon>Thermoprotei</taxon>
        <taxon>Sulfolobales</taxon>
        <taxon>Sulfolobaceae</taxon>
        <taxon>Metallosphaera</taxon>
    </lineage>
</organism>
<protein>
    <recommendedName>
        <fullName evidence="1">Glycerol-1-phosphate dehydrogenase [NAD(P)+]</fullName>
        <shortName evidence="1">G1P dehydrogenase</shortName>
        <shortName evidence="1">G1PDH</shortName>
        <ecNumber evidence="1">1.1.1.261</ecNumber>
    </recommendedName>
    <alternativeName>
        <fullName evidence="1">Enantiomeric glycerophosphate synthase</fullName>
    </alternativeName>
    <alternativeName>
        <fullName evidence="1">sn-glycerol-1-phosphate dehydrogenase</fullName>
    </alternativeName>
</protein>
<keyword id="KW-0963">Cytoplasm</keyword>
<keyword id="KW-0444">Lipid biosynthesis</keyword>
<keyword id="KW-0443">Lipid metabolism</keyword>
<keyword id="KW-0479">Metal-binding</keyword>
<keyword id="KW-0520">NAD</keyword>
<keyword id="KW-0521">NADP</keyword>
<keyword id="KW-0560">Oxidoreductase</keyword>
<keyword id="KW-0594">Phospholipid biosynthesis</keyword>
<keyword id="KW-1208">Phospholipid metabolism</keyword>
<keyword id="KW-1185">Reference proteome</keyword>
<keyword id="KW-0862">Zinc</keyword>
<accession>A4YIZ1</accession>
<feature type="chain" id="PRO_1000072433" description="Glycerol-1-phosphate dehydrogenase [NAD(P)+]">
    <location>
        <begin position="1"/>
        <end position="351"/>
    </location>
</feature>
<feature type="binding site" evidence="1">
    <location>
        <begin position="97"/>
        <end position="101"/>
    </location>
    <ligand>
        <name>NAD(+)</name>
        <dbReference type="ChEBI" id="CHEBI:57540"/>
    </ligand>
</feature>
<feature type="binding site" evidence="1">
    <location>
        <begin position="119"/>
        <end position="122"/>
    </location>
    <ligand>
        <name>NAD(+)</name>
        <dbReference type="ChEBI" id="CHEBI:57540"/>
    </ligand>
</feature>
<feature type="binding site" evidence="1">
    <location>
        <position position="124"/>
    </location>
    <ligand>
        <name>substrate</name>
    </ligand>
</feature>
<feature type="binding site" evidence="1">
    <location>
        <position position="128"/>
    </location>
    <ligand>
        <name>NAD(+)</name>
        <dbReference type="ChEBI" id="CHEBI:57540"/>
    </ligand>
</feature>
<feature type="binding site" evidence="1">
    <location>
        <position position="171"/>
    </location>
    <ligand>
        <name>substrate</name>
    </ligand>
</feature>
<feature type="binding site" evidence="1">
    <location>
        <position position="171"/>
    </location>
    <ligand>
        <name>Zn(2+)</name>
        <dbReference type="ChEBI" id="CHEBI:29105"/>
        <note>catalytic</note>
    </ligand>
</feature>
<feature type="binding site" evidence="1">
    <location>
        <position position="251"/>
    </location>
    <ligand>
        <name>Zn(2+)</name>
        <dbReference type="ChEBI" id="CHEBI:29105"/>
        <note>catalytic</note>
    </ligand>
</feature>
<feature type="binding site" evidence="1">
    <location>
        <position position="255"/>
    </location>
    <ligand>
        <name>substrate</name>
    </ligand>
</feature>
<feature type="binding site" evidence="1">
    <location>
        <position position="267"/>
    </location>
    <ligand>
        <name>Zn(2+)</name>
        <dbReference type="ChEBI" id="CHEBI:29105"/>
        <note>catalytic</note>
    </ligand>
</feature>
<name>G1PDH_METS5</name>
<comment type="function">
    <text evidence="1">Catalyzes the NAD(P)H-dependent reduction of dihydroxyacetonephosphate (DHAP or glycerone phosphate) to glycerol 1-phosphate (G1P). The G1P thus generated is used as the glycerophosphate backbone of phospholipids in the cellular membranes of Archaea.</text>
</comment>
<comment type="catalytic activity">
    <reaction evidence="1">
        <text>sn-glycerol 1-phosphate + NAD(+) = dihydroxyacetone phosphate + NADH + H(+)</text>
        <dbReference type="Rhea" id="RHEA:21412"/>
        <dbReference type="ChEBI" id="CHEBI:15378"/>
        <dbReference type="ChEBI" id="CHEBI:57540"/>
        <dbReference type="ChEBI" id="CHEBI:57642"/>
        <dbReference type="ChEBI" id="CHEBI:57685"/>
        <dbReference type="ChEBI" id="CHEBI:57945"/>
        <dbReference type="EC" id="1.1.1.261"/>
    </reaction>
</comment>
<comment type="catalytic activity">
    <reaction evidence="1">
        <text>sn-glycerol 1-phosphate + NADP(+) = dihydroxyacetone phosphate + NADPH + H(+)</text>
        <dbReference type="Rhea" id="RHEA:21416"/>
        <dbReference type="ChEBI" id="CHEBI:15378"/>
        <dbReference type="ChEBI" id="CHEBI:57642"/>
        <dbReference type="ChEBI" id="CHEBI:57685"/>
        <dbReference type="ChEBI" id="CHEBI:57783"/>
        <dbReference type="ChEBI" id="CHEBI:58349"/>
        <dbReference type="EC" id="1.1.1.261"/>
    </reaction>
</comment>
<comment type="cofactor">
    <cofactor evidence="1">
        <name>Zn(2+)</name>
        <dbReference type="ChEBI" id="CHEBI:29105"/>
    </cofactor>
    <text evidence="1">Binds 1 zinc ion per subunit.</text>
</comment>
<comment type="pathway">
    <text evidence="1">Membrane lipid metabolism; glycerophospholipid metabolism.</text>
</comment>
<comment type="subunit">
    <text evidence="1">Homodimer.</text>
</comment>
<comment type="subcellular location">
    <subcellularLocation>
        <location evidence="1">Cytoplasm</location>
    </subcellularLocation>
</comment>
<comment type="similarity">
    <text evidence="1">Belongs to the glycerol-1-phosphate dehydrogenase family.</text>
</comment>
<evidence type="ECO:0000255" key="1">
    <source>
        <dbReference type="HAMAP-Rule" id="MF_00497"/>
    </source>
</evidence>
<sequence>MEIHEHIIELPKKVYVGNGILSKLRDYLFQLNVLEPVLVVTGPNVRKIVIDEVAKGLNEIGKIEFIEVLDSSIDEVNRVEEKAKQLNPKFVLGIGGGKTIDVAKYVAYKLNVNFISIPTAPSHDGITSPFASIKGLGKPVSVKAKMPYAIIADINVLSSAPRRLINSGIGDTIGKLVAVRDWKLASKLTGEYYGDYTASLALLSAKHALSCTRIIHRDLKYSVSLLTEALISSGVAMGMAGSTRPASGSEHLFAHAVDLLQPNAALHGELVGMGSIIMAYIHGINWREIRNALDRIGAPTTAKQLGIPNDVIIKALTIAHTIRPERYTILGDRGLTWASAEKVARDTGVIE</sequence>